<sequence>MAAMAVGGAGGSRVSSGRDLNCVPEIADTLGAVAKQGFDFLCMPVFHPRFKRESIQEPAKNRPGPQTRSDLLLSGRDWNTLIVGKLSPWIRPDSKVEKIRRNSEAAMLQELNFGAYLGLPAFLLPLNQEDNTNLARVLTNHIHTGHHSSMFWMRVPLVAPEDLRDDIIENAPTTHTEEYSGEEKTWMWWHNFRTLCDYSKRIAVALEIGADLPSNHVIDRWLGEPIKAAILPTSIFLTNKKGFPVLSKMHQRLIFRLLKLEVQFIITGTNHHSEKEFCSYLQYLEYLSQNRPPPNAYELFAKGYEDYLQSPLQPLMDNLESQTYEVFEKDPIKYSQYQQAIYKCLLGRVPEEEKDTNVQVLMVLGAGRGPLVNASLRAAKQADRRIKLYAVEKNPNAVVTLENWQFEEWGSQVTVVSSDMREWVAPEKADIIVSELLGSFADNELSPECLDGAQHFLKDDGVSIPGEYTSFLAPISSSKLYNEVRACREKDRDPEAQFEMPYVVRLHNFHQLSAPQPCFTFSHPNRDPMIDNNRYCTLEFPVEVNTVLHGFAGYFETVLYQDITLSIRPETHSPGMFSWFPILFPIKQPITVREGQTICVRFWRCSNSKKVWYEWAVTAPVCSAIHNPTGRSYTIGL</sequence>
<proteinExistence type="evidence at transcript level"/>
<evidence type="ECO:0000250" key="1"/>
<evidence type="ECO:0000250" key="2">
    <source>
        <dbReference type="UniProtKB" id="O14744"/>
    </source>
</evidence>
<evidence type="ECO:0000250" key="3">
    <source>
        <dbReference type="UniProtKB" id="P46580"/>
    </source>
</evidence>
<evidence type="ECO:0000250" key="4">
    <source>
        <dbReference type="UniProtKB" id="Q8CIG8"/>
    </source>
</evidence>
<evidence type="ECO:0000255" key="5">
    <source>
        <dbReference type="PROSITE-ProRule" id="PRU01015"/>
    </source>
</evidence>
<evidence type="ECO:0000305" key="6"/>
<accession>Q4R5M3</accession>
<gene>
    <name type="primary">PRMT5</name>
    <name type="synonym">SKB1</name>
    <name type="ORF">QccE-13573</name>
</gene>
<protein>
    <recommendedName>
        <fullName>Protein arginine N-methyltransferase 5</fullName>
        <shortName>PRMT5</shortName>
        <ecNumber evidence="2">2.1.1.320</ecNumber>
    </recommendedName>
    <alternativeName>
        <fullName>Histone-arginine N-methyltransferase PRMT5</fullName>
    </alternativeName>
    <alternativeName>
        <fullName>Shk1 kinase-binding protein 1 homolog</fullName>
        <shortName>SKB1 homolog</shortName>
    </alternativeName>
</protein>
<organism>
    <name type="scientific">Macaca fascicularis</name>
    <name type="common">Crab-eating macaque</name>
    <name type="synonym">Cynomolgus monkey</name>
    <dbReference type="NCBI Taxonomy" id="9541"/>
    <lineage>
        <taxon>Eukaryota</taxon>
        <taxon>Metazoa</taxon>
        <taxon>Chordata</taxon>
        <taxon>Craniata</taxon>
        <taxon>Vertebrata</taxon>
        <taxon>Euteleostomi</taxon>
        <taxon>Mammalia</taxon>
        <taxon>Eutheria</taxon>
        <taxon>Euarchontoglires</taxon>
        <taxon>Primates</taxon>
        <taxon>Haplorrhini</taxon>
        <taxon>Catarrhini</taxon>
        <taxon>Cercopithecidae</taxon>
        <taxon>Cercopithecinae</taxon>
        <taxon>Macaca</taxon>
    </lineage>
</organism>
<keyword id="KW-0007">Acetylation</keyword>
<keyword id="KW-0090">Biological rhythms</keyword>
<keyword id="KW-0156">Chromatin regulator</keyword>
<keyword id="KW-0963">Cytoplasm</keyword>
<keyword id="KW-0333">Golgi apparatus</keyword>
<keyword id="KW-0489">Methyltransferase</keyword>
<keyword id="KW-0539">Nucleus</keyword>
<keyword id="KW-1185">Reference proteome</keyword>
<keyword id="KW-0678">Repressor</keyword>
<keyword id="KW-0949">S-adenosyl-L-methionine</keyword>
<keyword id="KW-0804">Transcription</keyword>
<keyword id="KW-0805">Transcription regulation</keyword>
<keyword id="KW-0808">Transferase</keyword>
<reference key="1">
    <citation type="submission" date="2005-06" db="EMBL/GenBank/DDBJ databases">
        <title>DNA sequences of macaque genes expressed in brain or testis and its evolutionary implications.</title>
        <authorList>
            <consortium name="International consortium for macaque cDNA sequencing and analysis"/>
        </authorList>
    </citation>
    <scope>NUCLEOTIDE SEQUENCE [LARGE SCALE MRNA]</scope>
    <source>
        <tissue>Brain cortex</tissue>
    </source>
</reference>
<name>ANM5_MACFA</name>
<comment type="function">
    <text evidence="2 4">Arginine methyltransferase that can both catalyze the formation of omega-N monomethylarginine (MMA) and symmetrical dimethylarginine (sDMA), with a preference for the formation of MMA. Specifically mediates the symmetrical dimethylation of arginine residues in the small nuclear ribonucleoproteins Sm D1 (SNRPD1) and Sm D3 (SNRPD3); such methylation being required for the assembly and biogenesis of snRNP core particles. Methylates SUPT5H and may regulate its transcriptional elongation properties (By similarity). May methylate the N-terminal region of MBD2 (By similarity). Mono- and dimethylates arginine residues of myelin basic protein (MBP) in vitro. May play a role in cytokine-activated transduction pathways. Negatively regulates cyclin E1 promoter activity and cellular proliferation. Methylates histone H2A and H4 'Arg-3' during germ cell development (By similarity). Methylates histone H3 'Arg-8', which may repress transcription (By similarity). Methylates the Piwi proteins (PIWIL1, PIWIL2 and PIWIL4), methylation of Piwi proteins being required for the interaction with Tudor domain-containing proteins and subsequent localization to the meiotic nuage (By similarity). Methylates RPS10. Attenuates EGF signaling through the MAPK1/MAPK3 pathway acting at 2 levels. First, monomethylates EGFR; this enhances EGFR 'Tyr-1197' phosphorylation and PTPN6 recruitment, eventually leading to reduced SOS1 phosphorylation. Second, methylates RAF1 and probably BRAF, hence destabilizing these 2 signaling proteins and reducing their catalytic activity. Required for induction of E-selectin and VCAM-1, on the endothelial cells surface at sites of inflammation. Methylates HOXA9. Methylates and regulates SRGAP2 which is involved in cell migration and differentiation (By similarity). Acts as a transcriptional corepressor in CRY1-mediated repression of the core circadian component PER1 by regulating the H4R3 dimethylation at the PER1 promoter (By similarity). Methylates GM130/GOLGA2, regulating Golgi ribbon formation. Methylates H4R3 in genes involved in glioblastomagenesis in a CHTOP- and/or TET1-dependent manner. Symmetrically methylates POLR2A, a modification that allows the recruitment to POLR2A of proteins including SMN1/SMN2 and SETX. This is required for resolving RNA-DNA hybrids created by RNA polymerase II, that form R-loop in transcription terminal regions, an important step in proper transcription termination. Along with LYAR, binds the promoter of gamma-globin HBG1/HBG2 and represses its expression. Symmetrically methylates NCL. Methylates p53/TP53; methylation might possibly affect p53/TP53 target gene specificity (By similarity). Involved in spliceosome maturation and mRNA splicing in prophase I spermatocytes through the catalysis of the symmetrical arginine dimethylation of SNRPB (small nuclear ribonucleoprotein-associated protein) and the interaction with tudor domain-containing protein TDRD6 (By similarity).</text>
</comment>
<comment type="catalytic activity">
    <reaction evidence="2">
        <text>L-arginyl-[protein] + 2 S-adenosyl-L-methionine = N(omega),N(omega)'-dimethyl-L-arginyl-[protein] + 2 S-adenosyl-L-homocysteine + 2 H(+)</text>
        <dbReference type="Rhea" id="RHEA:48108"/>
        <dbReference type="Rhea" id="RHEA-COMP:10532"/>
        <dbReference type="Rhea" id="RHEA-COMP:11992"/>
        <dbReference type="ChEBI" id="CHEBI:15378"/>
        <dbReference type="ChEBI" id="CHEBI:29965"/>
        <dbReference type="ChEBI" id="CHEBI:57856"/>
        <dbReference type="ChEBI" id="CHEBI:59789"/>
        <dbReference type="ChEBI" id="CHEBI:88221"/>
        <dbReference type="EC" id="2.1.1.320"/>
    </reaction>
</comment>
<comment type="activity regulation">
    <text evidence="1">Activity is increased by EGF, HGF, FGF1 or FGF2 treatments, and slightly decreased by NGF treatment.</text>
</comment>
<comment type="subunit">
    <text evidence="2 4">Forms, at least, homodimers and homotetramers. Component of the methylosome complex, composed of PRMT5, WDR77 and CLNS1A. Found in a complex composed of PRMT5, WDR77 and RIOK1. RIOK1 and CLNS1A associate with PRMT5 in a mutually exclusive fashion, which allows the recruitment of distinct methylation substrates, such as nucleolin/NCL and Sm proteins, respectively (By similarity). Interacts with PRDM1 (By similarity). Identified in a complex composed of methylosome and PRMT1 and ERH. Interacts with EGFR; methylates EGFR and stimulates EGFR-mediated ERK activation. Interacts with HOXA9. Interacts with SRGAP2. Found in a complex with COPRS, RUNX1 and CBFB. Interacts with CHTOP; the interaction symmetrically methylates CHTOP, but seems to require the presence of PRMT1. Interacts with EPB41L3; this modulates methylation of target proteins. Component of a high molecular weight E2F-pocket protein complex, CERC (cyclin E1 repressor complex). Associates with SWI/SNF remodeling complexes containing SMARCA2 and SMARCA4. Interacts with JAK2, SSTR1, SUPT5H, BRAF and with active RAF1. Interacts with LSM11, PRMT7 and SNRPD3. Interacts with COPRS; promoting its recruitment on histone H4. Interacts with CLNS1A/pICln. Identified in a complex with CLNS1A/pICln and Sm proteins. Interacts with RPS10. Interacts with WDR77. Interacts with IWS1. Interacts with CRY1. Interacts with POLR2A. Interacts with SMN1/SMN2. Interacts with LYAR; this interaction is direct. Interacts with TTC5/STRAP; this interaction is DNA damage-dependent and promotes PRMT5 interaction with p53/TP53. Interacts with p53/TP53 in response to DNA damage; the interaction is TTC5/STRAP dependent. Interacts with FAM47E; the interaction is direct, promotes PRMT5 localization to chromatin, and does not disrupt its association with WDR77 or STUB1 (By similarity). Interacts with TDRD6 (By similarity). Interacts with STUB1 (By similarity). Interacts with MBD2 (By similarity). Does not interact with MBD3 (By similarity).</text>
</comment>
<comment type="subcellular location">
    <subcellularLocation>
        <location evidence="2">Cytoplasm</location>
    </subcellularLocation>
    <subcellularLocation>
        <location evidence="2">Nucleus</location>
    </subcellularLocation>
    <subcellularLocation>
        <location evidence="2">Golgi apparatus</location>
    </subcellularLocation>
    <text evidence="2">Localizes to promoter regions of target genes on chromosomes (By similarity). Localizes to methylated chromatin (By similarity).</text>
</comment>
<comment type="similarity">
    <text evidence="5">Belongs to the class I-like SAM-binding methyltransferase superfamily. Protein arginine N-methyltransferase family.</text>
</comment>
<comment type="sequence caution" evidence="6">
    <conflict type="erroneous initiation">
        <sequence resource="EMBL-CDS" id="BAE01602"/>
    </conflict>
    <text>Extended N-terminus.</text>
</comment>
<dbReference type="EC" id="2.1.1.320" evidence="2"/>
<dbReference type="EMBL" id="AB169520">
    <property type="protein sequence ID" value="BAE01602.1"/>
    <property type="status" value="ALT_INIT"/>
    <property type="molecule type" value="mRNA"/>
</dbReference>
<dbReference type="SMR" id="Q4R5M3"/>
<dbReference type="IntAct" id="Q4R5M3">
    <property type="interactions" value="1"/>
</dbReference>
<dbReference type="MINT" id="Q4R5M3"/>
<dbReference type="STRING" id="9541.ENSMFAP00000008227"/>
<dbReference type="eggNOG" id="KOG0822">
    <property type="taxonomic scope" value="Eukaryota"/>
</dbReference>
<dbReference type="Proteomes" id="UP000233100">
    <property type="component" value="Unplaced"/>
</dbReference>
<dbReference type="GO" id="GO:0005829">
    <property type="term" value="C:cytosol"/>
    <property type="evidence" value="ECO:0000250"/>
    <property type="project" value="UniProtKB"/>
</dbReference>
<dbReference type="GO" id="GO:0005794">
    <property type="term" value="C:Golgi apparatus"/>
    <property type="evidence" value="ECO:0000250"/>
    <property type="project" value="UniProtKB"/>
</dbReference>
<dbReference type="GO" id="GO:0034709">
    <property type="term" value="C:methylosome"/>
    <property type="evidence" value="ECO:0000250"/>
    <property type="project" value="UniProtKB"/>
</dbReference>
<dbReference type="GO" id="GO:0005634">
    <property type="term" value="C:nucleus"/>
    <property type="evidence" value="ECO:0000250"/>
    <property type="project" value="UniProtKB"/>
</dbReference>
<dbReference type="GO" id="GO:0070888">
    <property type="term" value="F:E-box binding"/>
    <property type="evidence" value="ECO:0000250"/>
    <property type="project" value="UniProtKB"/>
</dbReference>
<dbReference type="GO" id="GO:0008469">
    <property type="term" value="F:histone arginine N-methyltransferase activity"/>
    <property type="evidence" value="ECO:0007669"/>
    <property type="project" value="TreeGrafter"/>
</dbReference>
<dbReference type="GO" id="GO:0044020">
    <property type="term" value="F:histone H4R3 methyltransferase activity"/>
    <property type="evidence" value="ECO:0000250"/>
    <property type="project" value="UniProtKB"/>
</dbReference>
<dbReference type="GO" id="GO:0008327">
    <property type="term" value="F:methyl-CpG binding"/>
    <property type="evidence" value="ECO:0000250"/>
    <property type="project" value="UniProtKB"/>
</dbReference>
<dbReference type="GO" id="GO:0016274">
    <property type="term" value="F:protein-arginine N-methyltransferase activity"/>
    <property type="evidence" value="ECO:0000250"/>
    <property type="project" value="UniProtKB"/>
</dbReference>
<dbReference type="GO" id="GO:0035243">
    <property type="term" value="F:protein-arginine omega-N symmetric methyltransferase activity"/>
    <property type="evidence" value="ECO:0000250"/>
    <property type="project" value="UniProtKB"/>
</dbReference>
<dbReference type="GO" id="GO:0003714">
    <property type="term" value="F:transcription corepressor activity"/>
    <property type="evidence" value="ECO:0000250"/>
    <property type="project" value="UniProtKB"/>
</dbReference>
<dbReference type="GO" id="GO:0032922">
    <property type="term" value="P:circadian regulation of gene expression"/>
    <property type="evidence" value="ECO:0000250"/>
    <property type="project" value="UniProtKB"/>
</dbReference>
<dbReference type="GO" id="GO:0006353">
    <property type="term" value="P:DNA-templated transcription termination"/>
    <property type="evidence" value="ECO:0000250"/>
    <property type="project" value="UniProtKB"/>
</dbReference>
<dbReference type="GO" id="GO:0042118">
    <property type="term" value="P:endothelial cell activation"/>
    <property type="evidence" value="ECO:0000250"/>
    <property type="project" value="UniProtKB"/>
</dbReference>
<dbReference type="GO" id="GO:0090161">
    <property type="term" value="P:Golgi ribbon formation"/>
    <property type="evidence" value="ECO:0000250"/>
    <property type="project" value="UniProtKB"/>
</dbReference>
<dbReference type="GO" id="GO:0018216">
    <property type="term" value="P:peptidyl-arginine methylation"/>
    <property type="evidence" value="ECO:0000250"/>
    <property type="project" value="UniProtKB"/>
</dbReference>
<dbReference type="GO" id="GO:0000387">
    <property type="term" value="P:spliceosomal snRNP assembly"/>
    <property type="evidence" value="ECO:0000250"/>
    <property type="project" value="UniProtKB"/>
</dbReference>
<dbReference type="CDD" id="cd02440">
    <property type="entry name" value="AdoMet_MTases"/>
    <property type="match status" value="1"/>
</dbReference>
<dbReference type="FunFam" id="2.70.160.11:FF:000003">
    <property type="entry name" value="Protein arginine N-methyltransferase 5"/>
    <property type="match status" value="1"/>
</dbReference>
<dbReference type="FunFam" id="3.20.20.150:FF:000008">
    <property type="entry name" value="Protein arginine N-methyltransferase 5"/>
    <property type="match status" value="1"/>
</dbReference>
<dbReference type="FunFam" id="3.40.50.150:FF:000029">
    <property type="entry name" value="Protein arginine N-methyltransferase 5"/>
    <property type="match status" value="1"/>
</dbReference>
<dbReference type="Gene3D" id="3.20.20.150">
    <property type="entry name" value="Divalent-metal-dependent TIM barrel enzymes"/>
    <property type="match status" value="1"/>
</dbReference>
<dbReference type="Gene3D" id="2.70.160.11">
    <property type="entry name" value="Hnrnp arginine n-methyltransferase1"/>
    <property type="match status" value="1"/>
</dbReference>
<dbReference type="Gene3D" id="3.40.50.150">
    <property type="entry name" value="Vaccinia Virus protein VP39"/>
    <property type="match status" value="1"/>
</dbReference>
<dbReference type="InterPro" id="IPR025799">
    <property type="entry name" value="Arg_MeTrfase"/>
</dbReference>
<dbReference type="InterPro" id="IPR007857">
    <property type="entry name" value="Arg_MeTrfase_PRMT5"/>
</dbReference>
<dbReference type="InterPro" id="IPR035075">
    <property type="entry name" value="PRMT5"/>
</dbReference>
<dbReference type="InterPro" id="IPR035248">
    <property type="entry name" value="PRMT5_C"/>
</dbReference>
<dbReference type="InterPro" id="IPR035247">
    <property type="entry name" value="PRMT5_TIM"/>
</dbReference>
<dbReference type="InterPro" id="IPR029063">
    <property type="entry name" value="SAM-dependent_MTases_sf"/>
</dbReference>
<dbReference type="PANTHER" id="PTHR10738">
    <property type="entry name" value="PROTEIN ARGININE N-METHYLTRANSFERASE 5"/>
    <property type="match status" value="1"/>
</dbReference>
<dbReference type="PANTHER" id="PTHR10738:SF0">
    <property type="entry name" value="PROTEIN ARGININE N-METHYLTRANSFERASE 5"/>
    <property type="match status" value="1"/>
</dbReference>
<dbReference type="Pfam" id="PF05185">
    <property type="entry name" value="PRMT5"/>
    <property type="match status" value="1"/>
</dbReference>
<dbReference type="Pfam" id="PF17286">
    <property type="entry name" value="PRMT5_C"/>
    <property type="match status" value="1"/>
</dbReference>
<dbReference type="Pfam" id="PF17285">
    <property type="entry name" value="PRMT5_TIM"/>
    <property type="match status" value="1"/>
</dbReference>
<dbReference type="PIRSF" id="PIRSF015894">
    <property type="entry name" value="Skb1_MeTrfase"/>
    <property type="match status" value="1"/>
</dbReference>
<dbReference type="SUPFAM" id="SSF53335">
    <property type="entry name" value="S-adenosyl-L-methionine-dependent methyltransferases"/>
    <property type="match status" value="1"/>
</dbReference>
<dbReference type="PROSITE" id="PS51678">
    <property type="entry name" value="SAM_MT_PRMT"/>
    <property type="match status" value="1"/>
</dbReference>
<feature type="initiator methionine" description="Removed" evidence="2">
    <location>
        <position position="1"/>
    </location>
</feature>
<feature type="chain" id="PRO_0000212343" description="Protein arginine N-methyltransferase 5">
    <location>
        <begin position="2"/>
        <end position="637"/>
    </location>
</feature>
<feature type="domain" description="SAM-dependent MTase PRMT-type" evidence="5">
    <location>
        <begin position="308"/>
        <end position="615"/>
    </location>
</feature>
<feature type="region of interest" description="TIM barrel" evidence="2">
    <location>
        <begin position="13"/>
        <end position="292"/>
    </location>
</feature>
<feature type="region of interest" description="Beta barrel" evidence="2">
    <location>
        <begin position="465"/>
        <end position="637"/>
    </location>
</feature>
<feature type="region of interest" description="Dimerization" evidence="2">
    <location>
        <begin position="488"/>
        <end position="494"/>
    </location>
</feature>
<feature type="active site" description="Proton donor/acceptor" evidence="2">
    <location>
        <position position="435"/>
    </location>
</feature>
<feature type="active site" description="Proton donor/acceptor" evidence="2">
    <location>
        <position position="444"/>
    </location>
</feature>
<feature type="binding site" evidence="2">
    <location>
        <position position="324"/>
    </location>
    <ligand>
        <name>S-adenosyl-L-methionine</name>
        <dbReference type="ChEBI" id="CHEBI:59789"/>
    </ligand>
</feature>
<feature type="binding site" evidence="2">
    <location>
        <position position="327"/>
    </location>
    <ligand>
        <name>a protein</name>
        <dbReference type="ChEBI" id="CHEBI:16541"/>
        <note>substrate</note>
    </ligand>
    <ligandPart>
        <name>L-arginine residue</name>
        <dbReference type="ChEBI" id="CHEBI:29965"/>
    </ligandPart>
</feature>
<feature type="binding site" evidence="2">
    <location>
        <begin position="333"/>
        <end position="334"/>
    </location>
    <ligand>
        <name>S-adenosyl-L-methionine</name>
        <dbReference type="ChEBI" id="CHEBI:59789"/>
    </ligand>
</feature>
<feature type="binding site" evidence="2">
    <location>
        <position position="392"/>
    </location>
    <ligand>
        <name>S-adenosyl-L-methionine</name>
        <dbReference type="ChEBI" id="CHEBI:59789"/>
    </ligand>
</feature>
<feature type="binding site" evidence="2">
    <location>
        <begin position="419"/>
        <end position="420"/>
    </location>
    <ligand>
        <name>S-adenosyl-L-methionine</name>
        <dbReference type="ChEBI" id="CHEBI:59789"/>
    </ligand>
</feature>
<feature type="binding site" evidence="2">
    <location>
        <position position="435"/>
    </location>
    <ligand>
        <name>a protein</name>
        <dbReference type="ChEBI" id="CHEBI:16541"/>
        <note>substrate</note>
    </ligand>
    <ligandPart>
        <name>L-arginine residue</name>
        <dbReference type="ChEBI" id="CHEBI:29965"/>
    </ligandPart>
</feature>
<feature type="binding site" evidence="2">
    <location>
        <position position="444"/>
    </location>
    <ligand>
        <name>a protein</name>
        <dbReference type="ChEBI" id="CHEBI:16541"/>
        <note>substrate</note>
    </ligand>
    <ligandPart>
        <name>L-arginine residue</name>
        <dbReference type="ChEBI" id="CHEBI:29965"/>
    </ligandPart>
</feature>
<feature type="site" description="Critical for specifying symmetric addition of methyl groups" evidence="3">
    <location>
        <position position="327"/>
    </location>
</feature>
<feature type="modified residue" description="N-acetylalanine" evidence="2">
    <location>
        <position position="2"/>
    </location>
</feature>